<evidence type="ECO:0000255" key="1">
    <source>
        <dbReference type="HAMAP-Rule" id="MF_00908"/>
    </source>
</evidence>
<dbReference type="EMBL" id="CP000507">
    <property type="protein sequence ID" value="ABL99911.1"/>
    <property type="molecule type" value="Genomic_DNA"/>
</dbReference>
<dbReference type="RefSeq" id="WP_011759819.1">
    <property type="nucleotide sequence ID" value="NC_008700.1"/>
</dbReference>
<dbReference type="SMR" id="A1S6A5"/>
<dbReference type="STRING" id="326297.Sama_1705"/>
<dbReference type="KEGG" id="saz:Sama_1705"/>
<dbReference type="eggNOG" id="COG3057">
    <property type="taxonomic scope" value="Bacteria"/>
</dbReference>
<dbReference type="HOGENOM" id="CLU_099733_0_0_6"/>
<dbReference type="OrthoDB" id="5591069at2"/>
<dbReference type="Proteomes" id="UP000009175">
    <property type="component" value="Chromosome"/>
</dbReference>
<dbReference type="GO" id="GO:0005737">
    <property type="term" value="C:cytoplasm"/>
    <property type="evidence" value="ECO:0007669"/>
    <property type="project" value="UniProtKB-SubCell"/>
</dbReference>
<dbReference type="GO" id="GO:0003677">
    <property type="term" value="F:DNA binding"/>
    <property type="evidence" value="ECO:0007669"/>
    <property type="project" value="UniProtKB-UniRule"/>
</dbReference>
<dbReference type="GO" id="GO:0032297">
    <property type="term" value="P:negative regulation of DNA-templated DNA replication initiation"/>
    <property type="evidence" value="ECO:0007669"/>
    <property type="project" value="UniProtKB-UniRule"/>
</dbReference>
<dbReference type="GO" id="GO:0006355">
    <property type="term" value="P:regulation of DNA-templated transcription"/>
    <property type="evidence" value="ECO:0007669"/>
    <property type="project" value="InterPro"/>
</dbReference>
<dbReference type="Gene3D" id="1.10.1220.10">
    <property type="entry name" value="Met repressor-like"/>
    <property type="match status" value="1"/>
</dbReference>
<dbReference type="Gene3D" id="1.20.1380.10">
    <property type="entry name" value="Replication modulator SeqA, C-terminal DNA-binding domain"/>
    <property type="match status" value="1"/>
</dbReference>
<dbReference type="HAMAP" id="MF_00908">
    <property type="entry name" value="SeqA"/>
    <property type="match status" value="1"/>
</dbReference>
<dbReference type="InterPro" id="IPR013321">
    <property type="entry name" value="Arc_rbn_hlx_hlx"/>
</dbReference>
<dbReference type="InterPro" id="IPR010985">
    <property type="entry name" value="Ribbon_hlx_hlx"/>
</dbReference>
<dbReference type="InterPro" id="IPR005621">
    <property type="entry name" value="SeqA"/>
</dbReference>
<dbReference type="InterPro" id="IPR026577">
    <property type="entry name" value="SeqA_DNA-bd_C"/>
</dbReference>
<dbReference type="InterPro" id="IPR036835">
    <property type="entry name" value="SeqA_DNA-bd_C_sf"/>
</dbReference>
<dbReference type="InterPro" id="IPR033761">
    <property type="entry name" value="SeqA_N"/>
</dbReference>
<dbReference type="NCBIfam" id="NF008389">
    <property type="entry name" value="PRK11187.1"/>
    <property type="match status" value="1"/>
</dbReference>
<dbReference type="Pfam" id="PF03925">
    <property type="entry name" value="SeqA"/>
    <property type="match status" value="1"/>
</dbReference>
<dbReference type="Pfam" id="PF17206">
    <property type="entry name" value="SeqA_N"/>
    <property type="match status" value="1"/>
</dbReference>
<dbReference type="PIRSF" id="PIRSF019401">
    <property type="entry name" value="SeqA"/>
    <property type="match status" value="1"/>
</dbReference>
<dbReference type="SUPFAM" id="SSF82808">
    <property type="entry name" value="Replication modulator SeqA, C-terminal DNA-binding domain"/>
    <property type="match status" value="1"/>
</dbReference>
<dbReference type="SUPFAM" id="SSF47598">
    <property type="entry name" value="Ribbon-helix-helix"/>
    <property type="match status" value="1"/>
</dbReference>
<accession>A1S6A5</accession>
<sequence>MKYIEVDEELYRYIAGKTERIGESASDILRRLLGLSVAEVSEVAPVDISEPGMEHEPVQVREAEPEPVPEVEVAAQTEIDFSDLLSEAGLAAQKGAVGRFLYALECLHQAAPSRFEQVLQIQGRDRLYFATSKEALLKASQSANPKEIGSSGFWVTTNNNTAKKRTILEEALVQLGCDPVRAKSLGELALA</sequence>
<name>SEQA_SHEAM</name>
<comment type="function">
    <text evidence="1">Negative regulator of replication initiation, which contributes to regulation of DNA replication and ensures that replication initiation occurs exactly once per chromosome per cell cycle. Binds to pairs of hemimethylated GATC sequences in the oriC region, thus preventing assembly of replication proteins and re-initiation at newly replicated origins. Repression is relieved when the region becomes fully methylated.</text>
</comment>
<comment type="subunit">
    <text evidence="1">Homodimer. Polymerizes to form helical filaments.</text>
</comment>
<comment type="subcellular location">
    <subcellularLocation>
        <location evidence="1">Cytoplasm</location>
    </subcellularLocation>
</comment>
<comment type="similarity">
    <text evidence="1">Belongs to the SeqA family.</text>
</comment>
<organism>
    <name type="scientific">Shewanella amazonensis (strain ATCC BAA-1098 / SB2B)</name>
    <dbReference type="NCBI Taxonomy" id="326297"/>
    <lineage>
        <taxon>Bacteria</taxon>
        <taxon>Pseudomonadati</taxon>
        <taxon>Pseudomonadota</taxon>
        <taxon>Gammaproteobacteria</taxon>
        <taxon>Alteromonadales</taxon>
        <taxon>Shewanellaceae</taxon>
        <taxon>Shewanella</taxon>
    </lineage>
</organism>
<keyword id="KW-0963">Cytoplasm</keyword>
<keyword id="KW-0236">DNA replication inhibitor</keyword>
<keyword id="KW-0238">DNA-binding</keyword>
<keyword id="KW-1185">Reference proteome</keyword>
<protein>
    <recommendedName>
        <fullName evidence="1">Negative modulator of initiation of replication</fullName>
    </recommendedName>
</protein>
<gene>
    <name evidence="1" type="primary">seqA</name>
    <name type="ordered locus">Sama_1705</name>
</gene>
<feature type="chain" id="PRO_0000413935" description="Negative modulator of initiation of replication">
    <location>
        <begin position="1"/>
        <end position="191"/>
    </location>
</feature>
<feature type="region of interest" description="Interaction with DNA" evidence="1">
    <location>
        <begin position="96"/>
        <end position="97"/>
    </location>
</feature>
<proteinExistence type="inferred from homology"/>
<reference key="1">
    <citation type="submission" date="2006-12" db="EMBL/GenBank/DDBJ databases">
        <title>Complete sequence of Shewanella amazonensis SB2B.</title>
        <authorList>
            <consortium name="US DOE Joint Genome Institute"/>
            <person name="Copeland A."/>
            <person name="Lucas S."/>
            <person name="Lapidus A."/>
            <person name="Barry K."/>
            <person name="Detter J.C."/>
            <person name="Glavina del Rio T."/>
            <person name="Hammon N."/>
            <person name="Israni S."/>
            <person name="Dalin E."/>
            <person name="Tice H."/>
            <person name="Pitluck S."/>
            <person name="Munk A.C."/>
            <person name="Brettin T."/>
            <person name="Bruce D."/>
            <person name="Han C."/>
            <person name="Tapia R."/>
            <person name="Gilna P."/>
            <person name="Schmutz J."/>
            <person name="Larimer F."/>
            <person name="Land M."/>
            <person name="Hauser L."/>
            <person name="Kyrpides N."/>
            <person name="Mikhailova N."/>
            <person name="Fredrickson J."/>
            <person name="Richardson P."/>
        </authorList>
    </citation>
    <scope>NUCLEOTIDE SEQUENCE [LARGE SCALE GENOMIC DNA]</scope>
    <source>
        <strain>ATCC BAA-1098 / SB2B</strain>
    </source>
</reference>